<reference key="1">
    <citation type="journal article" date="2009" name="Genome Res.">
        <title>Comparative genomic analyses of the human fungal pathogens Coccidioides and their relatives.</title>
        <authorList>
            <person name="Sharpton T.J."/>
            <person name="Stajich J.E."/>
            <person name="Rounsley S.D."/>
            <person name="Gardner M.J."/>
            <person name="Wortman J.R."/>
            <person name="Jordar V.S."/>
            <person name="Maiti R."/>
            <person name="Kodira C.D."/>
            <person name="Neafsey D.E."/>
            <person name="Zeng Q."/>
            <person name="Hung C.-Y."/>
            <person name="McMahan C."/>
            <person name="Muszewska A."/>
            <person name="Grynberg M."/>
            <person name="Mandel M.A."/>
            <person name="Kellner E.M."/>
            <person name="Barker B.M."/>
            <person name="Galgiani J.N."/>
            <person name="Orbach M.J."/>
            <person name="Kirkland T.N."/>
            <person name="Cole G.T."/>
            <person name="Henn M.R."/>
            <person name="Birren B.W."/>
            <person name="Taylor J.W."/>
        </authorList>
    </citation>
    <scope>NUCLEOTIDE SEQUENCE [LARGE SCALE GENOMIC DNA]</scope>
    <source>
        <strain>RS</strain>
    </source>
</reference>
<reference key="2">
    <citation type="journal article" date="2010" name="Genome Res.">
        <title>Population genomic sequencing of Coccidioides fungi reveals recent hybridization and transposon control.</title>
        <authorList>
            <person name="Neafsey D.E."/>
            <person name="Barker B.M."/>
            <person name="Sharpton T.J."/>
            <person name="Stajich J.E."/>
            <person name="Park D.J."/>
            <person name="Whiston E."/>
            <person name="Hung C.-Y."/>
            <person name="McMahan C."/>
            <person name="White J."/>
            <person name="Sykes S."/>
            <person name="Heiman D."/>
            <person name="Young S."/>
            <person name="Zeng Q."/>
            <person name="Abouelleil A."/>
            <person name="Aftuck L."/>
            <person name="Bessette D."/>
            <person name="Brown A."/>
            <person name="FitzGerald M."/>
            <person name="Lui A."/>
            <person name="Macdonald J.P."/>
            <person name="Priest M."/>
            <person name="Orbach M.J."/>
            <person name="Galgiani J.N."/>
            <person name="Kirkland T.N."/>
            <person name="Cole G.T."/>
            <person name="Birren B.W."/>
            <person name="Henn M.R."/>
            <person name="Taylor J.W."/>
            <person name="Rounsley S.D."/>
        </authorList>
    </citation>
    <scope>GENOME REANNOTATION</scope>
    <source>
        <strain>RS</strain>
    </source>
</reference>
<organism>
    <name type="scientific">Coccidioides immitis (strain RS)</name>
    <name type="common">Valley fever fungus</name>
    <dbReference type="NCBI Taxonomy" id="246410"/>
    <lineage>
        <taxon>Eukaryota</taxon>
        <taxon>Fungi</taxon>
        <taxon>Dikarya</taxon>
        <taxon>Ascomycota</taxon>
        <taxon>Pezizomycotina</taxon>
        <taxon>Eurotiomycetes</taxon>
        <taxon>Eurotiomycetidae</taxon>
        <taxon>Onygenales</taxon>
        <taxon>Onygenaceae</taxon>
        <taxon>Coccidioides</taxon>
    </lineage>
</organism>
<gene>
    <name type="primary">TIF1</name>
    <name type="synonym">TIF41</name>
    <name type="ORF">CIMG_07593</name>
</gene>
<sequence length="398" mass="44877">MASNDKGLEEIPDNQIESNYDEITDSFDAMNLRAELLRGVYAYGFERPSAIQQRAIMPVIKGSDVIAQAQSGTGKTATFSISALQKVDTNLKACQALILAPTRELAQQIQKVVVAIGDFMSVECHACIGGTNVREDIKALNDGPQVVVGTPGRVHDMIQRRVLKTDQMKMFVLDEADEMLSRGFTEQIYDIFQFLPQSTQVVLLSATMPQDVLDVTTKFMRDPVRILVKKAELTLEGIKQFYIAVEKEEWKLDTLSDLYETVTITQAVIFCNTRRKVDWLTDKLIARDFTVSAMHGEMEQNQRDVIMKEFRSGSSRVLIATDLLARGIDVQQVSLVINYDLPANRENYIHRIGRGGRFGRKGVAINFVTADDVRMMREIEQFYSTQIEEMPMNVADLI</sequence>
<feature type="chain" id="PRO_0000255983" description="ATP-dependent RNA helicase eIF4A">
    <location>
        <begin position="1"/>
        <end position="398"/>
    </location>
</feature>
<feature type="domain" description="Helicase ATP-binding" evidence="2">
    <location>
        <begin position="56"/>
        <end position="226"/>
    </location>
</feature>
<feature type="domain" description="Helicase C-terminal" evidence="3">
    <location>
        <begin position="237"/>
        <end position="398"/>
    </location>
</feature>
<feature type="short sequence motif" description="Q motif">
    <location>
        <begin position="25"/>
        <end position="53"/>
    </location>
</feature>
<feature type="short sequence motif" description="DEAD box">
    <location>
        <begin position="174"/>
        <end position="177"/>
    </location>
</feature>
<feature type="binding site" evidence="2">
    <location>
        <begin position="69"/>
        <end position="76"/>
    </location>
    <ligand>
        <name>ATP</name>
        <dbReference type="ChEBI" id="CHEBI:30616"/>
    </ligand>
</feature>
<proteinExistence type="inferred from homology"/>
<keyword id="KW-0067">ATP-binding</keyword>
<keyword id="KW-0963">Cytoplasm</keyword>
<keyword id="KW-0347">Helicase</keyword>
<keyword id="KW-0378">Hydrolase</keyword>
<keyword id="KW-0396">Initiation factor</keyword>
<keyword id="KW-0547">Nucleotide-binding</keyword>
<keyword id="KW-0648">Protein biosynthesis</keyword>
<keyword id="KW-1185">Reference proteome</keyword>
<keyword id="KW-0694">RNA-binding</keyword>
<evidence type="ECO:0000250" key="1"/>
<evidence type="ECO:0000255" key="2">
    <source>
        <dbReference type="PROSITE-ProRule" id="PRU00541"/>
    </source>
</evidence>
<evidence type="ECO:0000255" key="3">
    <source>
        <dbReference type="PROSITE-ProRule" id="PRU00542"/>
    </source>
</evidence>
<evidence type="ECO:0000305" key="4"/>
<dbReference type="EC" id="3.6.4.13"/>
<dbReference type="EMBL" id="GG704913">
    <property type="protein sequence ID" value="EAS28847.3"/>
    <property type="molecule type" value="Genomic_DNA"/>
</dbReference>
<dbReference type="RefSeq" id="XP_001240430.1">
    <property type="nucleotide sequence ID" value="XM_001240429.2"/>
</dbReference>
<dbReference type="SMR" id="Q1DQ20"/>
<dbReference type="FunCoup" id="Q1DQ20">
    <property type="interactions" value="1199"/>
</dbReference>
<dbReference type="STRING" id="246410.Q1DQ20"/>
<dbReference type="GeneID" id="4560095"/>
<dbReference type="KEGG" id="cim:CIMG_07593"/>
<dbReference type="VEuPathDB" id="FungiDB:CIMG_07593"/>
<dbReference type="InParanoid" id="Q1DQ20"/>
<dbReference type="OMA" id="FGCQALV"/>
<dbReference type="OrthoDB" id="10265785at2759"/>
<dbReference type="Proteomes" id="UP000001261">
    <property type="component" value="Unassembled WGS sequence"/>
</dbReference>
<dbReference type="GO" id="GO:0005737">
    <property type="term" value="C:cytoplasm"/>
    <property type="evidence" value="ECO:0007669"/>
    <property type="project" value="UniProtKB-SubCell"/>
</dbReference>
<dbReference type="GO" id="GO:0005524">
    <property type="term" value="F:ATP binding"/>
    <property type="evidence" value="ECO:0007669"/>
    <property type="project" value="UniProtKB-KW"/>
</dbReference>
<dbReference type="GO" id="GO:0016887">
    <property type="term" value="F:ATP hydrolysis activity"/>
    <property type="evidence" value="ECO:0007669"/>
    <property type="project" value="RHEA"/>
</dbReference>
<dbReference type="GO" id="GO:0003723">
    <property type="term" value="F:RNA binding"/>
    <property type="evidence" value="ECO:0007669"/>
    <property type="project" value="UniProtKB-KW"/>
</dbReference>
<dbReference type="GO" id="GO:0003724">
    <property type="term" value="F:RNA helicase activity"/>
    <property type="evidence" value="ECO:0007669"/>
    <property type="project" value="UniProtKB-EC"/>
</dbReference>
<dbReference type="GO" id="GO:0003743">
    <property type="term" value="F:translation initiation factor activity"/>
    <property type="evidence" value="ECO:0007669"/>
    <property type="project" value="UniProtKB-KW"/>
</dbReference>
<dbReference type="CDD" id="cd18046">
    <property type="entry name" value="DEADc_EIF4AII_EIF4AI_DDX2"/>
    <property type="match status" value="1"/>
</dbReference>
<dbReference type="CDD" id="cd18787">
    <property type="entry name" value="SF2_C_DEAD"/>
    <property type="match status" value="1"/>
</dbReference>
<dbReference type="FunFam" id="3.40.50.300:FF:000089">
    <property type="entry name" value="Eukaryotic initiation factor 4A-II"/>
    <property type="match status" value="1"/>
</dbReference>
<dbReference type="FunFam" id="3.40.50.300:FF:000031">
    <property type="entry name" value="Eukaryotic initiation factor 4A-III"/>
    <property type="match status" value="1"/>
</dbReference>
<dbReference type="Gene3D" id="3.40.50.300">
    <property type="entry name" value="P-loop containing nucleotide triphosphate hydrolases"/>
    <property type="match status" value="2"/>
</dbReference>
<dbReference type="InterPro" id="IPR011545">
    <property type="entry name" value="DEAD/DEAH_box_helicase_dom"/>
</dbReference>
<dbReference type="InterPro" id="IPR044728">
    <property type="entry name" value="EIF4A_DEADc"/>
</dbReference>
<dbReference type="InterPro" id="IPR014001">
    <property type="entry name" value="Helicase_ATP-bd"/>
</dbReference>
<dbReference type="InterPro" id="IPR001650">
    <property type="entry name" value="Helicase_C-like"/>
</dbReference>
<dbReference type="InterPro" id="IPR027417">
    <property type="entry name" value="P-loop_NTPase"/>
</dbReference>
<dbReference type="InterPro" id="IPR000629">
    <property type="entry name" value="RNA-helicase_DEAD-box_CS"/>
</dbReference>
<dbReference type="InterPro" id="IPR014014">
    <property type="entry name" value="RNA_helicase_DEAD_Q_motif"/>
</dbReference>
<dbReference type="PANTHER" id="PTHR47958">
    <property type="entry name" value="ATP-DEPENDENT RNA HELICASE DBP3"/>
    <property type="match status" value="1"/>
</dbReference>
<dbReference type="Pfam" id="PF00270">
    <property type="entry name" value="DEAD"/>
    <property type="match status" value="1"/>
</dbReference>
<dbReference type="Pfam" id="PF00271">
    <property type="entry name" value="Helicase_C"/>
    <property type="match status" value="1"/>
</dbReference>
<dbReference type="SMART" id="SM00487">
    <property type="entry name" value="DEXDc"/>
    <property type="match status" value="1"/>
</dbReference>
<dbReference type="SMART" id="SM00490">
    <property type="entry name" value="HELICc"/>
    <property type="match status" value="1"/>
</dbReference>
<dbReference type="SUPFAM" id="SSF52540">
    <property type="entry name" value="P-loop containing nucleoside triphosphate hydrolases"/>
    <property type="match status" value="1"/>
</dbReference>
<dbReference type="PROSITE" id="PS00039">
    <property type="entry name" value="DEAD_ATP_HELICASE"/>
    <property type="match status" value="1"/>
</dbReference>
<dbReference type="PROSITE" id="PS51192">
    <property type="entry name" value="HELICASE_ATP_BIND_1"/>
    <property type="match status" value="1"/>
</dbReference>
<dbReference type="PROSITE" id="PS51194">
    <property type="entry name" value="HELICASE_CTER"/>
    <property type="match status" value="1"/>
</dbReference>
<dbReference type="PROSITE" id="PS51195">
    <property type="entry name" value="Q_MOTIF"/>
    <property type="match status" value="1"/>
</dbReference>
<name>IF4A_COCIM</name>
<protein>
    <recommendedName>
        <fullName>ATP-dependent RNA helicase eIF4A</fullName>
        <ecNumber>3.6.4.13</ecNumber>
    </recommendedName>
    <alternativeName>
        <fullName>Eukaryotic initiation factor 4A</fullName>
        <shortName>eIF-4A</shortName>
    </alternativeName>
    <alternativeName>
        <fullName>Translation initiation factor 1</fullName>
    </alternativeName>
</protein>
<comment type="function">
    <text evidence="1">ATP-dependent RNA helicase which is a subunit of the eIF4F complex involved in cap recognition and is required for mRNA binding to ribosome. In the current model of translation initiation, eIF4A unwinds RNA secondary structures in the 5'-UTR of mRNAs which is necessary to allow efficient binding of the small ribosomal subunit, and subsequent scanning for the initiator codon (By similarity).</text>
</comment>
<comment type="catalytic activity">
    <reaction>
        <text>ATP + H2O = ADP + phosphate + H(+)</text>
        <dbReference type="Rhea" id="RHEA:13065"/>
        <dbReference type="ChEBI" id="CHEBI:15377"/>
        <dbReference type="ChEBI" id="CHEBI:15378"/>
        <dbReference type="ChEBI" id="CHEBI:30616"/>
        <dbReference type="ChEBI" id="CHEBI:43474"/>
        <dbReference type="ChEBI" id="CHEBI:456216"/>
        <dbReference type="EC" id="3.6.4.13"/>
    </reaction>
</comment>
<comment type="subunit">
    <text evidence="1">Component of the eIF4F complex, which composition varies with external and internal environmental conditions. It is composed of at least eIF4A, eIF4E and eIF4G (By similarity).</text>
</comment>
<comment type="subcellular location">
    <subcellularLocation>
        <location evidence="1">Cytoplasm</location>
    </subcellularLocation>
</comment>
<comment type="domain">
    <text>The Q motif is unique to and characteristic of the DEAD box family of RNA helicases and controls ATP binding and hydrolysis.</text>
</comment>
<comment type="similarity">
    <text evidence="4">Belongs to the DEAD box helicase family. eIF4A subfamily.</text>
</comment>
<accession>Q1DQ20</accession>
<accession>J3K4C7</accession>